<comment type="function">
    <text evidence="1 5">Plays an essential role in viral RNA synthesis and also a role in suppressing innate immune signaling.</text>
</comment>
<comment type="subunit">
    <text evidence="1 2">Homooligomer. Homomultimerization via the coiled coil domain is a prerequisite for binding to L. Found in a trimeric complex in which VP35 bridges L and the nucleoprotein (By similarity). Interacts with NP (By similarity). Disrupts innate immune signaling in infected host cell (By similarity).</text>
</comment>
<comment type="subcellular location">
    <subcellularLocation>
        <location evidence="1">Virion</location>
    </subcellularLocation>
    <subcellularLocation>
        <location evidence="1">Host cytoplasm</location>
    </subcellularLocation>
</comment>
<comment type="similarity">
    <text evidence="4 6">Belongs to the filoviridae polymerase cofactor VP35 family.</text>
</comment>
<dbReference type="EMBL" id="X64406">
    <property type="protein sequence ID" value="CAA45748.1"/>
    <property type="molecule type" value="Genomic_RNA"/>
</dbReference>
<dbReference type="EMBL" id="Z29337">
    <property type="protein sequence ID" value="CAA82537.1"/>
    <property type="molecule type" value="Genomic_RNA"/>
</dbReference>
<dbReference type="PIR" id="S32582">
    <property type="entry name" value="S32582"/>
</dbReference>
<dbReference type="PDB" id="4GHL">
    <property type="method" value="X-ray"/>
    <property type="resolution" value="2.02 A"/>
    <property type="chains" value="A/B/C/D=200-329"/>
</dbReference>
<dbReference type="PDB" id="6OTC">
    <property type="method" value="X-ray"/>
    <property type="resolution" value="1.70 A"/>
    <property type="chains" value="A=204-329"/>
</dbReference>
<dbReference type="PDBsum" id="4GHL"/>
<dbReference type="PDBsum" id="6OTC"/>
<dbReference type="SMR" id="Q03039"/>
<dbReference type="ABCD" id="Q03039">
    <property type="antibodies" value="5 sequenced antibodies"/>
</dbReference>
<dbReference type="EvolutionaryTrace" id="Q03039"/>
<dbReference type="Proteomes" id="UP000007772">
    <property type="component" value="Genome"/>
</dbReference>
<dbReference type="GO" id="GO:0030430">
    <property type="term" value="C:host cell cytoplasm"/>
    <property type="evidence" value="ECO:0007669"/>
    <property type="project" value="UniProtKB-SubCell"/>
</dbReference>
<dbReference type="GO" id="GO:0044423">
    <property type="term" value="C:virion component"/>
    <property type="evidence" value="ECO:0007669"/>
    <property type="project" value="UniProtKB-KW"/>
</dbReference>
<dbReference type="CDD" id="cd21030">
    <property type="entry name" value="V35-RBD_P-protein-C_like"/>
    <property type="match status" value="1"/>
</dbReference>
<dbReference type="FunFam" id="2.10.10.70:FF:000001">
    <property type="entry name" value="Polymerase cofactor VP35"/>
    <property type="match status" value="1"/>
</dbReference>
<dbReference type="Gene3D" id="2.10.10.70">
    <property type="entry name" value="Filoviridae VP35, C-terminal inhibitory domain, beta-sheet subdomain"/>
    <property type="match status" value="1"/>
</dbReference>
<dbReference type="Gene3D" id="1.10.8.950">
    <property type="entry name" value="Filoviridae VP35, C-terminal inhibitory domain, helical subdomain"/>
    <property type="match status" value="1"/>
</dbReference>
<dbReference type="InterPro" id="IPR002953">
    <property type="entry name" value="Filo_VP35"/>
</dbReference>
<dbReference type="InterPro" id="IPR031163">
    <property type="entry name" value="VP35_IID"/>
</dbReference>
<dbReference type="InterPro" id="IPR043061">
    <property type="entry name" value="VP35_IID_b-sht"/>
</dbReference>
<dbReference type="InterPro" id="IPR043060">
    <property type="entry name" value="VP35_IID_hlx"/>
</dbReference>
<dbReference type="Pfam" id="PF02097">
    <property type="entry name" value="Filo_VP35"/>
    <property type="match status" value="1"/>
</dbReference>
<dbReference type="PIRSF" id="PIRSF018326">
    <property type="entry name" value="VP35_FiloV"/>
    <property type="match status" value="1"/>
</dbReference>
<dbReference type="PRINTS" id="PR01240">
    <property type="entry name" value="FILOVP35"/>
</dbReference>
<dbReference type="PROSITE" id="PS51735">
    <property type="entry name" value="VP35_IID"/>
    <property type="match status" value="1"/>
</dbReference>
<protein>
    <recommendedName>
        <fullName>Polymerase cofactor VP35</fullName>
    </recommendedName>
    <alternativeName>
        <fullName>Marburg VP35</fullName>
        <shortName>mVP35</shortName>
    </alternativeName>
</protein>
<organismHost>
    <name type="scientific">Chlorocebus aethiops</name>
    <name type="common">Green monkey</name>
    <name type="synonym">Cercopithecus aethiops</name>
    <dbReference type="NCBI Taxonomy" id="9534"/>
</organismHost>
<organismHost>
    <name type="scientific">Homo sapiens</name>
    <name type="common">Human</name>
    <dbReference type="NCBI Taxonomy" id="9606"/>
</organismHost>
<organismHost>
    <name type="scientific">Rousettus aegyptiacus</name>
    <name type="common">Egyptian fruit bat</name>
    <name type="synonym">Pteropus aegyptiacus</name>
    <dbReference type="NCBI Taxonomy" id="9407"/>
</organismHost>
<gene>
    <name type="primary">VP35</name>
</gene>
<accession>Q03039</accession>
<reference key="1">
    <citation type="journal article" date="1993" name="FEBS Lett.">
        <title>The VP35 and VP40 proteins of filoviruses. Homology between Marburg and Ebola viruses.</title>
        <authorList>
            <person name="Bukreyev A.A."/>
            <person name="Volchkov V.E."/>
            <person name="Blinov V.M."/>
            <person name="Netesov S.V."/>
        </authorList>
    </citation>
    <scope>NUCLEOTIDE SEQUENCE [GENOMIC RNA]</scope>
</reference>
<reference key="2">
    <citation type="journal article" date="1995" name="Arch. Virol.">
        <title>The complete nucleotide sequence of the Popp (1967) strain of Marburg virus: a comparison with the Musoke (1980) strain.</title>
        <authorList>
            <person name="Bukreyev A.A."/>
            <person name="Volchkov V.E."/>
            <person name="Blinov V.M."/>
            <person name="Dryga S.A."/>
            <person name="Netesov S.V."/>
        </authorList>
    </citation>
    <scope>NUCLEOTIDE SEQUENCE [GENOMIC RNA]</scope>
</reference>
<reference evidence="7" key="3">
    <citation type="journal article" date="2012" name="Proc. Natl. Acad. Sci. U.S.A.">
        <title>Structural basis for Marburg virus VP35-mediated immune evasion mechanisms.</title>
        <authorList>
            <person name="Ramanan P."/>
            <person name="Edwards M.R."/>
            <person name="Shabman R.S."/>
            <person name="Leung D.W."/>
            <person name="Endlich-Frazier A.C."/>
            <person name="Borek D.M."/>
            <person name="Otwinowski Z."/>
            <person name="Liu G."/>
            <person name="Huh J."/>
            <person name="Basler C.F."/>
            <person name="Amarasinghe G.K."/>
        </authorList>
    </citation>
    <scope>X-RAY CRYSTALLOGRAPHY (2.02 ANGSTROMS) OF 200-329</scope>
    <scope>FUNCTION</scope>
</reference>
<proteinExistence type="evidence at protein level"/>
<feature type="chain" id="PRO_0000222163" description="Polymerase cofactor VP35">
    <location>
        <begin position="1"/>
        <end position="329"/>
    </location>
</feature>
<feature type="domain" description="VP35 IID" evidence="4">
    <location>
        <begin position="204"/>
        <end position="329"/>
    </location>
</feature>
<feature type="coiled-coil region" evidence="3">
    <location>
        <begin position="70"/>
        <end position="120"/>
    </location>
</feature>
<feature type="helix" evidence="8">
    <location>
        <begin position="200"/>
        <end position="203"/>
    </location>
</feature>
<feature type="helix" evidence="9">
    <location>
        <begin position="210"/>
        <end position="218"/>
    </location>
</feature>
<feature type="strand" evidence="9">
    <location>
        <begin position="223"/>
        <end position="225"/>
    </location>
</feature>
<feature type="helix" evidence="9">
    <location>
        <begin position="227"/>
        <end position="241"/>
    </location>
</feature>
<feature type="helix" evidence="9">
    <location>
        <begin position="245"/>
        <end position="257"/>
    </location>
</feature>
<feature type="helix" evidence="9">
    <location>
        <begin position="262"/>
        <end position="272"/>
    </location>
</feature>
<feature type="helix" evidence="9">
    <location>
        <begin position="274"/>
        <end position="276"/>
    </location>
</feature>
<feature type="strand" evidence="9">
    <location>
        <begin position="283"/>
        <end position="285"/>
    </location>
</feature>
<feature type="helix" evidence="8">
    <location>
        <begin position="289"/>
        <end position="291"/>
    </location>
</feature>
<feature type="helix" evidence="9">
    <location>
        <begin position="294"/>
        <end position="297"/>
    </location>
</feature>
<feature type="helix" evidence="9">
    <location>
        <begin position="309"/>
        <end position="311"/>
    </location>
</feature>
<feature type="strand" evidence="9">
    <location>
        <begin position="313"/>
        <end position="318"/>
    </location>
</feature>
<feature type="strand" evidence="9">
    <location>
        <begin position="324"/>
        <end position="328"/>
    </location>
</feature>
<name>VP35_MABVP</name>
<organism>
    <name type="scientific">Lake Victoria marburgvirus (strain Popp-67)</name>
    <name type="common">MARV</name>
    <name type="synonym">Marburg virus (strain West Germany/Popp/1967)</name>
    <dbReference type="NCBI Taxonomy" id="33728"/>
    <lineage>
        <taxon>Viruses</taxon>
        <taxon>Riboviria</taxon>
        <taxon>Orthornavirae</taxon>
        <taxon>Negarnaviricota</taxon>
        <taxon>Haploviricotina</taxon>
        <taxon>Monjiviricetes</taxon>
        <taxon>Mononegavirales</taxon>
        <taxon>Filoviridae</taxon>
        <taxon>Orthomarburgvirus</taxon>
        <taxon>Orthomarburgvirus marburgense</taxon>
    </lineage>
</organism>
<evidence type="ECO:0000250" key="1">
    <source>
        <dbReference type="UniProtKB" id="P35259"/>
    </source>
</evidence>
<evidence type="ECO:0000250" key="2">
    <source>
        <dbReference type="UniProtKB" id="Q6UY68"/>
    </source>
</evidence>
<evidence type="ECO:0000255" key="3"/>
<evidence type="ECO:0000255" key="4">
    <source>
        <dbReference type="PROSITE-ProRule" id="PRU01071"/>
    </source>
</evidence>
<evidence type="ECO:0000269" key="5">
    <source>
    </source>
</evidence>
<evidence type="ECO:0000305" key="6"/>
<evidence type="ECO:0007744" key="7">
    <source>
        <dbReference type="PDB" id="4GHL"/>
    </source>
</evidence>
<evidence type="ECO:0007829" key="8">
    <source>
        <dbReference type="PDB" id="4GHL"/>
    </source>
</evidence>
<evidence type="ECO:0007829" key="9">
    <source>
        <dbReference type="PDB" id="6OTC"/>
    </source>
</evidence>
<sequence>MWDSSYMQQVSEGLMTGKVPIDQVFGANPSEKLHKRRKPKGTVGLQCSPCLMSKATSTDDIVWDQLIVKKTLADLLIPINRQISDIQSTLNEVTTRVHEIERQLHEITPVLKMGRTLEAISKGMSEMLAKYDHLVISTGRTTAPAAAFDAYLNEHGVPPPQPAIFKDLGVAQQACSKGTMVKNETTDAADKMSKVLELSEETFSKPNLSAKDLALLLFTHLPGNNTPFHILAQVLSKIAYKSGKSGAFLDAFHQILSEGENAQAALTRLSRTFDAFLGVVPPVIRVKNFQTVPRPCQKSLRAVPPNPTIDKGWVCVYSSEQGETRALKI</sequence>
<keyword id="KW-0002">3D-structure</keyword>
<keyword id="KW-0175">Coiled coil</keyword>
<keyword id="KW-1035">Host cytoplasm</keyword>
<keyword id="KW-0804">Transcription</keyword>
<keyword id="KW-0693">Viral RNA replication</keyword>
<keyword id="KW-0946">Virion</keyword>